<proteinExistence type="inferred from homology"/>
<accession>Q0ZHI5</accession>
<keyword id="KW-0042">Antenna complex</keyword>
<keyword id="KW-0089">Bile pigment</keyword>
<keyword id="KW-0150">Chloroplast</keyword>
<keyword id="KW-0157">Chromophore</keyword>
<keyword id="KW-0249">Electron transport</keyword>
<keyword id="KW-0472">Membrane</keyword>
<keyword id="KW-0602">Photosynthesis</keyword>
<keyword id="KW-0605">Phycobilisome</keyword>
<keyword id="KW-0934">Plastid</keyword>
<keyword id="KW-0793">Thylakoid</keyword>
<keyword id="KW-0813">Transport</keyword>
<sequence length="162" mass="17464">MKTPITEAIASADSQGRFLSNGELQAINGRYQRAAASLGAARSLTNNAQRLITGAAQSVYTKFPYVTQMPGPTYASSAIGKAKCARDIGYYLRMVTYCLVVGATGPMDEYLVAGLEEINRSFELSPSWYVEALQYIKGSHGLSGQIGNEANVYLDYAINTLS</sequence>
<reference key="1">
    <citation type="submission" date="2006-03" db="EMBL/GenBank/DDBJ databases">
        <title>Cloning and sequence analysis of phycocyanin gene of Porphyra haitanensis.</title>
        <authorList>
            <person name="Zuo Z.-H."/>
            <person name="Yan G.-L."/>
            <person name="Xu S.-Y."/>
            <person name="Chen Y.-X."/>
        </authorList>
    </citation>
    <scope>NUCLEOTIDE SEQUENCE [GENOMIC DNA]</scope>
</reference>
<comment type="function">
    <text>Light-harvesting photosynthetic bile pigment-protein from the phycobiliprotein complex (phycobilisome, PBS). Phycocyanin is the major phycobiliprotein in the PBS rod.</text>
</comment>
<comment type="subunit">
    <text evidence="2">Heterodimer of an alpha and a beta subunit, which further assembles into trimers and the trimers into hexamers. The basic functional unit of phycobiliproteins is a ring-shaped hexamer formed from two back-to-back trimers contacting via the alpha chain subunits. The trimers are composed of alpha/beta subunit heterodimers arranged around a three-fold axis of symmetry. The phycoerythrins also contain a gamma subunit which is located in the center of the hexamer.</text>
</comment>
<comment type="subcellular location">
    <subcellularLocation>
        <location evidence="1">Plastid</location>
        <location evidence="1">Chloroplast thylakoid membrane</location>
        <topology evidence="1">Peripheral membrane protein</topology>
        <orientation evidence="1">Stromal side</orientation>
    </subcellularLocation>
    <text evidence="1">Part of the phycobilisome rod.</text>
</comment>
<comment type="PTM">
    <text evidence="2">Contains one covalently linked phycocyanobilin chromophore.</text>
</comment>
<comment type="similarity">
    <text evidence="3">Belongs to the phycobiliprotein family.</text>
</comment>
<evidence type="ECO:0000250" key="1"/>
<evidence type="ECO:0000250" key="2">
    <source>
        <dbReference type="UniProtKB" id="P00306"/>
    </source>
</evidence>
<evidence type="ECO:0000305" key="3"/>
<geneLocation type="chloroplast"/>
<feature type="chain" id="PRO_0000277333" description="C-phycocyanin alpha chain">
    <location>
        <begin position="1"/>
        <end position="162"/>
    </location>
</feature>
<feature type="binding site" description="covalent" evidence="2">
    <location>
        <position position="84"/>
    </location>
    <ligand>
        <name>(2R,3E)-phycocyanobilin</name>
        <dbReference type="ChEBI" id="CHEBI:85275"/>
    </ligand>
</feature>
<name>PHCA_PYRHA</name>
<organism>
    <name type="scientific">Pyropia haitanensis</name>
    <name type="common">Red seaweed</name>
    <name type="synonym">Porphyra haitanensis</name>
    <dbReference type="NCBI Taxonomy" id="1262161"/>
    <lineage>
        <taxon>Eukaryota</taxon>
        <taxon>Rhodophyta</taxon>
        <taxon>Bangiophyceae</taxon>
        <taxon>Bangiales</taxon>
        <taxon>Bangiaceae</taxon>
        <taxon>Pyropia</taxon>
    </lineage>
</organism>
<protein>
    <recommendedName>
        <fullName>C-phycocyanin alpha chain</fullName>
    </recommendedName>
</protein>
<dbReference type="EMBL" id="DQ449071">
    <property type="protein sequence ID" value="ABE27596.1"/>
    <property type="molecule type" value="Genomic_DNA"/>
</dbReference>
<dbReference type="RefSeq" id="YP_007947908.1">
    <property type="nucleotide sequence ID" value="NC_021189.1"/>
</dbReference>
<dbReference type="SMR" id="Q0ZHI5"/>
<dbReference type="GeneID" id="15525424"/>
<dbReference type="GO" id="GO:0009535">
    <property type="term" value="C:chloroplast thylakoid membrane"/>
    <property type="evidence" value="ECO:0007669"/>
    <property type="project" value="UniProtKB-SubCell"/>
</dbReference>
<dbReference type="GO" id="GO:0030089">
    <property type="term" value="C:phycobilisome"/>
    <property type="evidence" value="ECO:0007669"/>
    <property type="project" value="UniProtKB-KW"/>
</dbReference>
<dbReference type="GO" id="GO:0015979">
    <property type="term" value="P:photosynthesis"/>
    <property type="evidence" value="ECO:0007669"/>
    <property type="project" value="UniProtKB-KW"/>
</dbReference>
<dbReference type="CDD" id="cd14770">
    <property type="entry name" value="PC-PEC_alpha"/>
    <property type="match status" value="1"/>
</dbReference>
<dbReference type="Gene3D" id="1.10.490.20">
    <property type="entry name" value="Phycocyanins"/>
    <property type="match status" value="1"/>
</dbReference>
<dbReference type="InterPro" id="IPR009050">
    <property type="entry name" value="Globin-like_sf"/>
</dbReference>
<dbReference type="InterPro" id="IPR012128">
    <property type="entry name" value="Phycobilisome_asu/bsu"/>
</dbReference>
<dbReference type="InterPro" id="IPR038719">
    <property type="entry name" value="Phycobilisome_asu/bsu_sf"/>
</dbReference>
<dbReference type="InterPro" id="IPR006246">
    <property type="entry name" value="Phycocyanin_a"/>
</dbReference>
<dbReference type="NCBIfam" id="TIGR01338">
    <property type="entry name" value="phycocy_alpha"/>
    <property type="match status" value="1"/>
</dbReference>
<dbReference type="PANTHER" id="PTHR34011:SF4">
    <property type="entry name" value="C-PHYCOCYANIN ALPHA SUBUNIT"/>
    <property type="match status" value="1"/>
</dbReference>
<dbReference type="PANTHER" id="PTHR34011">
    <property type="entry name" value="PHYCOBILISOME 32.1 KDA LINKER POLYPEPTIDE, PHYCOCYANIN-ASSOCIATED, ROD 2-RELATED"/>
    <property type="match status" value="1"/>
</dbReference>
<dbReference type="Pfam" id="PF00502">
    <property type="entry name" value="Phycobilisome"/>
    <property type="match status" value="1"/>
</dbReference>
<dbReference type="PIRSF" id="PIRSF000081">
    <property type="entry name" value="Phycocyanin"/>
    <property type="match status" value="1"/>
</dbReference>
<dbReference type="SUPFAM" id="SSF46458">
    <property type="entry name" value="Globin-like"/>
    <property type="match status" value="1"/>
</dbReference>
<gene>
    <name type="primary">cpcA</name>
</gene>